<name>HXD10_CHICK</name>
<protein>
    <recommendedName>
        <fullName>Homeobox protein Hox-D10</fullName>
    </recommendedName>
    <alternativeName>
        <fullName>Chox-4D</fullName>
    </alternativeName>
    <alternativeName>
        <fullName>Homeobox protein Hox-4.5</fullName>
        <shortName>Chox-4.5</shortName>
    </alternativeName>
</protein>
<proteinExistence type="evidence at transcript level"/>
<accession>P24341</accession>
<gene>
    <name type="primary">HOXD10</name>
    <name type="synonym">CHOX-4.5</name>
</gene>
<evidence type="ECO:0000255" key="1">
    <source>
        <dbReference type="PROSITE-ProRule" id="PRU00108"/>
    </source>
</evidence>
<evidence type="ECO:0000305" key="2"/>
<reference key="1">
    <citation type="journal article" date="1991" name="Cell">
        <title>Involvement of the Chox-4 chicken homeobox genes in determination of anteroposterior axial polarity during limb development.</title>
        <authorList>
            <person name="Nohno T."/>
            <person name="Noji S."/>
            <person name="Koyama E."/>
            <person name="Ohyama K."/>
            <person name="Myokai F."/>
            <person name="Kuroiwa A."/>
            <person name="Saito T."/>
            <person name="Taniguchi S."/>
        </authorList>
    </citation>
    <scope>NUCLEOTIDE SEQUENCE [GENOMIC DNA]</scope>
</reference>
<reference key="2">
    <citation type="journal article" date="1991" name="Nature">
        <title>Expression of the homeobox Hox-4 genes and the specification of position in chick wing development.</title>
        <authorList>
            <person name="Izpisua-Belmonte J.-C."/>
            <person name="Tickle C."/>
            <person name="Dolle P."/>
            <person name="Wolpert L."/>
            <person name="Duboule D."/>
        </authorList>
    </citation>
    <scope>NUCLEOTIDE SEQUENCE [GENOMIC DNA] OF 21-80</scope>
</reference>
<keyword id="KW-0217">Developmental protein</keyword>
<keyword id="KW-0238">DNA-binding</keyword>
<keyword id="KW-0371">Homeobox</keyword>
<keyword id="KW-0539">Nucleus</keyword>
<keyword id="KW-1185">Reference proteome</keyword>
<keyword id="KW-0804">Transcription</keyword>
<keyword id="KW-0805">Transcription regulation</keyword>
<feature type="chain" id="PRO_0000200228" description="Homeobox protein Hox-D10">
    <location>
        <begin position="1" status="less than"/>
        <end position="95"/>
    </location>
</feature>
<feature type="DNA-binding region" description="Homeobox" evidence="1">
    <location>
        <begin position="21"/>
        <end position="80"/>
    </location>
</feature>
<feature type="non-terminal residue">
    <location>
        <position position="1"/>
    </location>
</feature>
<organism>
    <name type="scientific">Gallus gallus</name>
    <name type="common">Chicken</name>
    <dbReference type="NCBI Taxonomy" id="9031"/>
    <lineage>
        <taxon>Eukaryota</taxon>
        <taxon>Metazoa</taxon>
        <taxon>Chordata</taxon>
        <taxon>Craniata</taxon>
        <taxon>Vertebrata</taxon>
        <taxon>Euteleostomi</taxon>
        <taxon>Archelosauria</taxon>
        <taxon>Archosauria</taxon>
        <taxon>Dinosauria</taxon>
        <taxon>Saurischia</taxon>
        <taxon>Theropoda</taxon>
        <taxon>Coelurosauria</taxon>
        <taxon>Aves</taxon>
        <taxon>Neognathae</taxon>
        <taxon>Galloanserae</taxon>
        <taxon>Galliformes</taxon>
        <taxon>Phasianidae</taxon>
        <taxon>Phasianinae</taxon>
        <taxon>Gallus</taxon>
    </lineage>
</organism>
<sequence>FLIEEIKSDTPTSNWLTAKSGRKKRCPYTKHQTLELEKEFLFNMYLTRERRLEISKSVNLTDRQVKIWFQNRRMKLKKMSRENRIRELTANLTFS</sequence>
<comment type="function">
    <text>Sequence-specific transcription factor which is part of a developmental regulatory system that provides cells with specific positional identities on the anterior-posterior axis.</text>
</comment>
<comment type="subcellular location">
    <subcellularLocation>
        <location>Nucleus</location>
    </subcellularLocation>
</comment>
<comment type="developmental stage">
    <text>Coordinately expressed in partially overlapping domains during wing development.</text>
</comment>
<comment type="similarity">
    <text evidence="2">Belongs to the Abd-B homeobox family.</text>
</comment>
<comment type="sequence caution" evidence="2">
    <conflict type="erroneous initiation">
        <sequence resource="EMBL-CDS" id="BAA01132"/>
    </conflict>
</comment>
<dbReference type="EMBL" id="D10287">
    <property type="protein sequence ID" value="BAA01132.1"/>
    <property type="status" value="ALT_INIT"/>
    <property type="molecule type" value="Genomic_DNA"/>
</dbReference>
<dbReference type="PIR" id="A37914">
    <property type="entry name" value="A37914"/>
</dbReference>
<dbReference type="SMR" id="P24341"/>
<dbReference type="FunCoup" id="P24341">
    <property type="interactions" value="188"/>
</dbReference>
<dbReference type="STRING" id="9031.ENSGALP00000037896"/>
<dbReference type="PaxDb" id="9031-ENSGALP00000037896"/>
<dbReference type="VEuPathDB" id="HostDB:geneid_771246"/>
<dbReference type="eggNOG" id="KOG0487">
    <property type="taxonomic scope" value="Eukaryota"/>
</dbReference>
<dbReference type="InParanoid" id="P24341"/>
<dbReference type="OrthoDB" id="6159439at2759"/>
<dbReference type="PhylomeDB" id="P24341"/>
<dbReference type="Proteomes" id="UP000000539">
    <property type="component" value="Unassembled WGS sequence"/>
</dbReference>
<dbReference type="GO" id="GO:0005634">
    <property type="term" value="C:nucleus"/>
    <property type="evidence" value="ECO:0007669"/>
    <property type="project" value="UniProtKB-SubCell"/>
</dbReference>
<dbReference type="GO" id="GO:0003677">
    <property type="term" value="F:DNA binding"/>
    <property type="evidence" value="ECO:0007669"/>
    <property type="project" value="UniProtKB-KW"/>
</dbReference>
<dbReference type="GO" id="GO:0000981">
    <property type="term" value="F:DNA-binding transcription factor activity, RNA polymerase II-specific"/>
    <property type="evidence" value="ECO:0007669"/>
    <property type="project" value="InterPro"/>
</dbReference>
<dbReference type="CDD" id="cd00086">
    <property type="entry name" value="homeodomain"/>
    <property type="match status" value="1"/>
</dbReference>
<dbReference type="FunFam" id="1.10.10.60:FF:000018">
    <property type="entry name" value="Homeobox A10"/>
    <property type="match status" value="1"/>
</dbReference>
<dbReference type="Gene3D" id="1.10.10.60">
    <property type="entry name" value="Homeodomain-like"/>
    <property type="match status" value="1"/>
</dbReference>
<dbReference type="InterPro" id="IPR001356">
    <property type="entry name" value="HD"/>
</dbReference>
<dbReference type="InterPro" id="IPR020479">
    <property type="entry name" value="HD_metazoa"/>
</dbReference>
<dbReference type="InterPro" id="IPR017970">
    <property type="entry name" value="Homeobox_CS"/>
</dbReference>
<dbReference type="InterPro" id="IPR009057">
    <property type="entry name" value="Homeodomain-like_sf"/>
</dbReference>
<dbReference type="InterPro" id="IPR046333">
    <property type="entry name" value="HXA10/ABDB-like"/>
</dbReference>
<dbReference type="PANTHER" id="PTHR45874">
    <property type="entry name" value="HOMEOBOX PROTEIN ABDOMINAL-B"/>
    <property type="match status" value="1"/>
</dbReference>
<dbReference type="PANTHER" id="PTHR45874:SF5">
    <property type="entry name" value="HOMEOBOX PROTEIN HOX-D10"/>
    <property type="match status" value="1"/>
</dbReference>
<dbReference type="Pfam" id="PF00046">
    <property type="entry name" value="Homeodomain"/>
    <property type="match status" value="1"/>
</dbReference>
<dbReference type="PRINTS" id="PR00024">
    <property type="entry name" value="HOMEOBOX"/>
</dbReference>
<dbReference type="SMART" id="SM00389">
    <property type="entry name" value="HOX"/>
    <property type="match status" value="1"/>
</dbReference>
<dbReference type="SUPFAM" id="SSF46689">
    <property type="entry name" value="Homeodomain-like"/>
    <property type="match status" value="1"/>
</dbReference>
<dbReference type="PROSITE" id="PS00027">
    <property type="entry name" value="HOMEOBOX_1"/>
    <property type="match status" value="1"/>
</dbReference>
<dbReference type="PROSITE" id="PS50071">
    <property type="entry name" value="HOMEOBOX_2"/>
    <property type="match status" value="1"/>
</dbReference>